<comment type="function">
    <text evidence="1">Mnh complex is a Na(+)/H(+) antiporter involved in Na(+) excretion.</text>
</comment>
<comment type="subunit">
    <text evidence="1">May form a heterooligomeric complex that consists of seven subunits: mnhA1, mnhB1, mnhC1, mnhD1, mnhE1, mnhF1 and mnhG1.</text>
</comment>
<comment type="subcellular location">
    <subcellularLocation>
        <location evidence="3">Cell membrane</location>
        <topology evidence="3">Multi-pass membrane protein</topology>
    </subcellularLocation>
</comment>
<comment type="similarity">
    <text evidence="3">Belongs to the CPA3 antiporters (TC 2.A.63) subunit C family.</text>
</comment>
<accession>Q2YWT6</accession>
<reference key="1">
    <citation type="journal article" date="2007" name="PLoS ONE">
        <title>Molecular correlates of host specialization in Staphylococcus aureus.</title>
        <authorList>
            <person name="Herron-Olson L."/>
            <person name="Fitzgerald J.R."/>
            <person name="Musser J.M."/>
            <person name="Kapur V."/>
        </authorList>
    </citation>
    <scope>NUCLEOTIDE SEQUENCE [LARGE SCALE GENOMIC DNA]</scope>
    <source>
        <strain>bovine RF122 / ET3-1</strain>
    </source>
</reference>
<sequence length="113" mass="12293">MEIIMIFVSGILTAISVYLVLSKSLIRIVMGTTLLTHAANLFLITMGGLKHGTVPIYEANVKSYVDPIPQALILTAIVIAFATTAFFLVLAFRTYKELGTDNVESMKGVPEDD</sequence>
<gene>
    <name type="primary">mnhC1</name>
    <name type="ordered locus">SAB0817c</name>
</gene>
<keyword id="KW-0050">Antiport</keyword>
<keyword id="KW-1003">Cell membrane</keyword>
<keyword id="KW-0375">Hydrogen ion transport</keyword>
<keyword id="KW-0406">Ion transport</keyword>
<keyword id="KW-0472">Membrane</keyword>
<keyword id="KW-0915">Sodium</keyword>
<keyword id="KW-0739">Sodium transport</keyword>
<keyword id="KW-0812">Transmembrane</keyword>
<keyword id="KW-1133">Transmembrane helix</keyword>
<keyword id="KW-0813">Transport</keyword>
<name>MNHC1_STAAB</name>
<feature type="chain" id="PRO_0000372117" description="Na(+)/H(+) antiporter subunit C1">
    <location>
        <begin position="1"/>
        <end position="113"/>
    </location>
</feature>
<feature type="transmembrane region" description="Helical" evidence="2">
    <location>
        <begin position="1"/>
        <end position="21"/>
    </location>
</feature>
<feature type="transmembrane region" description="Helical" evidence="2">
    <location>
        <begin position="28"/>
        <end position="48"/>
    </location>
</feature>
<feature type="transmembrane region" description="Helical" evidence="2">
    <location>
        <begin position="72"/>
        <end position="92"/>
    </location>
</feature>
<protein>
    <recommendedName>
        <fullName>Na(+)/H(+) antiporter subunit C1</fullName>
    </recommendedName>
    <alternativeName>
        <fullName>Mnh complex subunit C1</fullName>
    </alternativeName>
</protein>
<organism>
    <name type="scientific">Staphylococcus aureus (strain bovine RF122 / ET3-1)</name>
    <dbReference type="NCBI Taxonomy" id="273036"/>
    <lineage>
        <taxon>Bacteria</taxon>
        <taxon>Bacillati</taxon>
        <taxon>Bacillota</taxon>
        <taxon>Bacilli</taxon>
        <taxon>Bacillales</taxon>
        <taxon>Staphylococcaceae</taxon>
        <taxon>Staphylococcus</taxon>
    </lineage>
</organism>
<evidence type="ECO:0000250" key="1"/>
<evidence type="ECO:0000255" key="2"/>
<evidence type="ECO:0000305" key="3"/>
<proteinExistence type="inferred from homology"/>
<dbReference type="EMBL" id="AJ938182">
    <property type="protein sequence ID" value="CAI80505.1"/>
    <property type="molecule type" value="Genomic_DNA"/>
</dbReference>
<dbReference type="RefSeq" id="WP_000402803.1">
    <property type="nucleotide sequence ID" value="NC_007622.1"/>
</dbReference>
<dbReference type="SMR" id="Q2YWT6"/>
<dbReference type="GeneID" id="98345271"/>
<dbReference type="KEGG" id="sab:SAB0817c"/>
<dbReference type="HOGENOM" id="CLU_082058_3_1_9"/>
<dbReference type="GO" id="GO:0005886">
    <property type="term" value="C:plasma membrane"/>
    <property type="evidence" value="ECO:0007669"/>
    <property type="project" value="UniProtKB-SubCell"/>
</dbReference>
<dbReference type="GO" id="GO:0015297">
    <property type="term" value="F:antiporter activity"/>
    <property type="evidence" value="ECO:0007669"/>
    <property type="project" value="UniProtKB-KW"/>
</dbReference>
<dbReference type="GO" id="GO:0008324">
    <property type="term" value="F:monoatomic cation transmembrane transporter activity"/>
    <property type="evidence" value="ECO:0007669"/>
    <property type="project" value="InterPro"/>
</dbReference>
<dbReference type="GO" id="GO:1902600">
    <property type="term" value="P:proton transmembrane transport"/>
    <property type="evidence" value="ECO:0007669"/>
    <property type="project" value="UniProtKB-KW"/>
</dbReference>
<dbReference type="GO" id="GO:0006814">
    <property type="term" value="P:sodium ion transport"/>
    <property type="evidence" value="ECO:0007669"/>
    <property type="project" value="UniProtKB-KW"/>
</dbReference>
<dbReference type="Gene3D" id="1.10.287.3510">
    <property type="match status" value="1"/>
</dbReference>
<dbReference type="InterPro" id="IPR050601">
    <property type="entry name" value="CPA3_antiporter_subunitC"/>
</dbReference>
<dbReference type="InterPro" id="IPR006673">
    <property type="entry name" value="Mnh_C1_su"/>
</dbReference>
<dbReference type="InterPro" id="IPR039428">
    <property type="entry name" value="NUOK/Mnh_C1-like"/>
</dbReference>
<dbReference type="NCBIfam" id="TIGR00941">
    <property type="entry name" value="2a6301s03"/>
    <property type="match status" value="1"/>
</dbReference>
<dbReference type="NCBIfam" id="NF006372">
    <property type="entry name" value="PRK08600.1"/>
    <property type="match status" value="1"/>
</dbReference>
<dbReference type="NCBIfam" id="NF006573">
    <property type="entry name" value="PRK09094.1"/>
    <property type="match status" value="1"/>
</dbReference>
<dbReference type="NCBIfam" id="NF009303">
    <property type="entry name" value="PRK12660.1"/>
    <property type="match status" value="1"/>
</dbReference>
<dbReference type="PANTHER" id="PTHR34583">
    <property type="entry name" value="ANTIPORTER SUBUNIT MNHC2-RELATED"/>
    <property type="match status" value="1"/>
</dbReference>
<dbReference type="PANTHER" id="PTHR34583:SF2">
    <property type="entry name" value="ANTIPORTER SUBUNIT MNHC2-RELATED"/>
    <property type="match status" value="1"/>
</dbReference>
<dbReference type="Pfam" id="PF00420">
    <property type="entry name" value="Oxidored_q2"/>
    <property type="match status" value="1"/>
</dbReference>